<name>GDT9_DICDI</name>
<reference key="1">
    <citation type="submission" date="2003-10" db="EMBL/GenBank/DDBJ databases">
        <title>Organization of slime mold dusty protein kinase gene.</title>
        <authorList>
            <person name="Huang C.-H."/>
        </authorList>
    </citation>
    <scope>NUCLEOTIDE SEQUENCE [GENOMIC DNA / MRNA]</scope>
</reference>
<reference key="2">
    <citation type="journal article" date="2005" name="Nature">
        <title>The genome of the social amoeba Dictyostelium discoideum.</title>
        <authorList>
            <person name="Eichinger L."/>
            <person name="Pachebat J.A."/>
            <person name="Gloeckner G."/>
            <person name="Rajandream M.A."/>
            <person name="Sucgang R."/>
            <person name="Berriman M."/>
            <person name="Song J."/>
            <person name="Olsen R."/>
            <person name="Szafranski K."/>
            <person name="Xu Q."/>
            <person name="Tunggal B."/>
            <person name="Kummerfeld S."/>
            <person name="Madera M."/>
            <person name="Konfortov B.A."/>
            <person name="Rivero F."/>
            <person name="Bankier A.T."/>
            <person name="Lehmann R."/>
            <person name="Hamlin N."/>
            <person name="Davies R."/>
            <person name="Gaudet P."/>
            <person name="Fey P."/>
            <person name="Pilcher K."/>
            <person name="Chen G."/>
            <person name="Saunders D."/>
            <person name="Sodergren E.J."/>
            <person name="Davis P."/>
            <person name="Kerhornou A."/>
            <person name="Nie X."/>
            <person name="Hall N."/>
            <person name="Anjard C."/>
            <person name="Hemphill L."/>
            <person name="Bason N."/>
            <person name="Farbrother P."/>
            <person name="Desany B."/>
            <person name="Just E."/>
            <person name="Morio T."/>
            <person name="Rost R."/>
            <person name="Churcher C.M."/>
            <person name="Cooper J."/>
            <person name="Haydock S."/>
            <person name="van Driessche N."/>
            <person name="Cronin A."/>
            <person name="Goodhead I."/>
            <person name="Muzny D.M."/>
            <person name="Mourier T."/>
            <person name="Pain A."/>
            <person name="Lu M."/>
            <person name="Harper D."/>
            <person name="Lindsay R."/>
            <person name="Hauser H."/>
            <person name="James K.D."/>
            <person name="Quiles M."/>
            <person name="Madan Babu M."/>
            <person name="Saito T."/>
            <person name="Buchrieser C."/>
            <person name="Wardroper A."/>
            <person name="Felder M."/>
            <person name="Thangavelu M."/>
            <person name="Johnson D."/>
            <person name="Knights A."/>
            <person name="Loulseged H."/>
            <person name="Mungall K.L."/>
            <person name="Oliver K."/>
            <person name="Price C."/>
            <person name="Quail M.A."/>
            <person name="Urushihara H."/>
            <person name="Hernandez J."/>
            <person name="Rabbinowitsch E."/>
            <person name="Steffen D."/>
            <person name="Sanders M."/>
            <person name="Ma J."/>
            <person name="Kohara Y."/>
            <person name="Sharp S."/>
            <person name="Simmonds M.N."/>
            <person name="Spiegler S."/>
            <person name="Tivey A."/>
            <person name="Sugano S."/>
            <person name="White B."/>
            <person name="Walker D."/>
            <person name="Woodward J.R."/>
            <person name="Winckler T."/>
            <person name="Tanaka Y."/>
            <person name="Shaulsky G."/>
            <person name="Schleicher M."/>
            <person name="Weinstock G.M."/>
            <person name="Rosenthal A."/>
            <person name="Cox E.C."/>
            <person name="Chisholm R.L."/>
            <person name="Gibbs R.A."/>
            <person name="Loomis W.F."/>
            <person name="Platzer M."/>
            <person name="Kay R.R."/>
            <person name="Williams J.G."/>
            <person name="Dear P.H."/>
            <person name="Noegel A.A."/>
            <person name="Barrell B.G."/>
            <person name="Kuspa A."/>
        </authorList>
    </citation>
    <scope>NUCLEOTIDE SEQUENCE [LARGE SCALE GENOMIC DNA]</scope>
    <source>
        <strain>AX4</strain>
    </source>
</reference>
<organism>
    <name type="scientific">Dictyostelium discoideum</name>
    <name type="common">Social amoeba</name>
    <dbReference type="NCBI Taxonomy" id="44689"/>
    <lineage>
        <taxon>Eukaryota</taxon>
        <taxon>Amoebozoa</taxon>
        <taxon>Evosea</taxon>
        <taxon>Eumycetozoa</taxon>
        <taxon>Dictyostelia</taxon>
        <taxon>Dictyosteliales</taxon>
        <taxon>Dictyosteliaceae</taxon>
        <taxon>Dictyostelium</taxon>
    </lineage>
</organism>
<sequence length="1577" mass="175900">MKTFLLIFLLICVCKGITNITTPSIYFDLKKINRFQDYLNNGITPSINLTFHDFYYPDVCVNTIKNIDGSTNFVKSSFLNAPTNFANLYITKGSKMTVKPNQILGAFINILCIEGSLEVPVGVFPFFIGALVILPGGNFKSESSFRFMNLVNSKIDPLNFFPGILTLGGSLSILGPKSIKYSANRLGDFQFQLLELIDPNSFNSDYKANIYSESFVTGQQCDFVSITNGYTLTVGGCQGVPSTDVNIYIFFATVDYDCTFIDSDSEVPASIYISGDTNVHIENFFLNSLGKTTNANYNDTILIFSPTDDTNVTDIIIGTNQRYRNSLFVEFSNNVTLRNNFIRESIESRSPLMFFASSPILEGNLVVSNSGSSVIAQFGTEFIQSTNNSYFLEPPTQPVIPNDNNMDYGTEGNGIYSLSPIVSFTTDVFVGQLISINFNFIANRSLVTGFNYDCFAPCYPGSPIISNLVQHSVDFNIIKPTFSYSHGNTTSSTTTSSTTTNTNSHFLLNVNDNGNEPSSYYSFNQLSIASEAIKVNLPIGTLGIGNLFATNNFKIDGALERLDILNSIFNLPPPISNNFSQSGILLSTTTSMLNSYVFVSIGSEPTRIESQIYGSTITPYYYNNIETLDLFQIQSIFPSVQYQIIKNSTINITINITTTTTTTTTPTTNNVVCSFTSIVNQQSSVTNEISINETLIQMDPILNNCVFPLSIDQEGSLKLRVTIKNQNSTLENQYYYIIDFPEITIFQSFQFYTGIKFIDVQSSSSSSQQTSSFSPTTTTFLNLLSTTENSNGFLNGCQISNQCTLSNNVKYVSSLPNVTNSPDFQLFQSGITPIIPYDPVVINLGIEKNKTFQFQLFFTFYQPIDQYSSPLSIFIQSEPYLLLDPLIDAPNFKNFTFFYDNLNQDSIEISFISRGDIYLTSMAIYSLDLVSYESSDSSSSSSNSSSSTGNGIGDIVNNEDNHKKLVIALSVSIPVAALLVILCFGIFICYNNNKKNKNETKGKDIETNTDKKDDENENENCKFQFKDEFLTNPNEINIQLKKLMINKSSTLPPQSTISIDTSPSSENTTFTESLTPKKSATVNGEIDFSRNSTNESTVSNSSSENNSDNNNNNNNKCKKEKLSSFPTIPGTNLTNIPLNLVGRKSRNPEDKYRTNNDILVCLQESHYFKPDDPSIPIEFSESVLDFGRGSKCLIDETYIYTISVKNKSTTDYNILLILPIDNNTGTISTDTQYFQINAGESKPISFSISLNCTTKYFEKIGVSIEELNYHTFICVHMESELSTRLDFSELDFDEICGQGTYGMVYKGKWRSQVVAIKMMRVGTVNCDEVYREMDIMGKIRHQNVISFIGCVVSLEHLCIVTEFSPIGSLGDLIHGDNNQKKSNTNTITNTITNTNTNTNTSTSTSTKLTVKQKLRIAIDIARGCQFLHQCGIIHRDLKPDNVLVFDINHNAPVCAKISDFGTSKETNEFSNKNTNCVGTPIYMSNEILEKKTYDNSTDVYSFAVLFYEMMIEEVPFSEIDEKWEIPSKVISGWRPTKGLNSLDRDIKNLINICWAPHSLPSFDEIVFSLVKIFKRFN</sequence>
<comment type="catalytic activity">
    <reaction>
        <text>L-seryl-[protein] + ATP = O-phospho-L-seryl-[protein] + ADP + H(+)</text>
        <dbReference type="Rhea" id="RHEA:17989"/>
        <dbReference type="Rhea" id="RHEA-COMP:9863"/>
        <dbReference type="Rhea" id="RHEA-COMP:11604"/>
        <dbReference type="ChEBI" id="CHEBI:15378"/>
        <dbReference type="ChEBI" id="CHEBI:29999"/>
        <dbReference type="ChEBI" id="CHEBI:30616"/>
        <dbReference type="ChEBI" id="CHEBI:83421"/>
        <dbReference type="ChEBI" id="CHEBI:456216"/>
        <dbReference type="EC" id="2.7.11.1"/>
    </reaction>
</comment>
<comment type="catalytic activity">
    <reaction>
        <text>L-threonyl-[protein] + ATP = O-phospho-L-threonyl-[protein] + ADP + H(+)</text>
        <dbReference type="Rhea" id="RHEA:46608"/>
        <dbReference type="Rhea" id="RHEA-COMP:11060"/>
        <dbReference type="Rhea" id="RHEA-COMP:11605"/>
        <dbReference type="ChEBI" id="CHEBI:15378"/>
        <dbReference type="ChEBI" id="CHEBI:30013"/>
        <dbReference type="ChEBI" id="CHEBI:30616"/>
        <dbReference type="ChEBI" id="CHEBI:61977"/>
        <dbReference type="ChEBI" id="CHEBI:456216"/>
        <dbReference type="EC" id="2.7.11.1"/>
    </reaction>
</comment>
<comment type="subcellular location">
    <subcellularLocation>
        <location evidence="5">Membrane</location>
        <topology evidence="5">Single-pass type I membrane protein</topology>
    </subcellularLocation>
</comment>
<comment type="similarity">
    <text evidence="5">In the N-terminal section; belongs to the GDT family.</text>
</comment>
<comment type="similarity">
    <text evidence="5">In the C-terminal section; belongs to the protein kinase superfamily. TKL Ser/Thr protein kinase family.</text>
</comment>
<feature type="signal peptide" evidence="1">
    <location>
        <begin position="1"/>
        <end position="16"/>
    </location>
</feature>
<feature type="chain" id="PRO_0000323586" description="Probable serine/threonine-protein kinase gdt9">
    <location>
        <begin position="17"/>
        <end position="1577"/>
    </location>
</feature>
<feature type="topological domain" description="Extracellular" evidence="1">
    <location>
        <begin position="17"/>
        <end position="966"/>
    </location>
</feature>
<feature type="transmembrane region" description="Helical" evidence="1">
    <location>
        <begin position="967"/>
        <end position="987"/>
    </location>
</feature>
<feature type="topological domain" description="Cytoplasmic" evidence="1">
    <location>
        <begin position="988"/>
        <end position="1577"/>
    </location>
</feature>
<feature type="domain" description="Protein kinase" evidence="2">
    <location>
        <begin position="1290"/>
        <end position="1573"/>
    </location>
</feature>
<feature type="region of interest" description="Disordered" evidence="4">
    <location>
        <begin position="998"/>
        <end position="1019"/>
    </location>
</feature>
<feature type="region of interest" description="Disordered" evidence="4">
    <location>
        <begin position="1050"/>
        <end position="1128"/>
    </location>
</feature>
<feature type="compositionally biased region" description="Basic and acidic residues" evidence="4">
    <location>
        <begin position="998"/>
        <end position="1014"/>
    </location>
</feature>
<feature type="compositionally biased region" description="Polar residues" evidence="4">
    <location>
        <begin position="1050"/>
        <end position="1082"/>
    </location>
</feature>
<feature type="compositionally biased region" description="Low complexity" evidence="4">
    <location>
        <begin position="1091"/>
        <end position="1115"/>
    </location>
</feature>
<feature type="active site" description="Proton acceptor" evidence="2 3">
    <location>
        <position position="1436"/>
    </location>
</feature>
<feature type="binding site" evidence="2">
    <location>
        <begin position="1296"/>
        <end position="1304"/>
    </location>
    <ligand>
        <name>ATP</name>
        <dbReference type="ChEBI" id="CHEBI:30616"/>
    </ligand>
</feature>
<feature type="binding site" evidence="2">
    <location>
        <position position="1317"/>
    </location>
    <ligand>
        <name>ATP</name>
        <dbReference type="ChEBI" id="CHEBI:30616"/>
    </ligand>
</feature>
<feature type="sequence conflict" description="In Ref. 1; AAS55398/AAS55399." evidence="5" ref="1">
    <original>N</original>
    <variation>K</variation>
    <location>
        <position position="283"/>
    </location>
</feature>
<feature type="sequence conflict" description="In Ref. 1; AAS55398/AAS55399." evidence="5" ref="1">
    <original>CV</original>
    <variation>WG</variation>
    <location>
        <begin position="1274"/>
        <end position="1275"/>
    </location>
</feature>
<feature type="sequence conflict" description="In Ref. 1; AAS55398/AAS55399." evidence="5" ref="1">
    <original>I</original>
    <variation>R</variation>
    <location>
        <position position="1552"/>
    </location>
</feature>
<feature type="sequence conflict" description="In Ref. 1; AAS55398/AAS55399." evidence="5" ref="1">
    <original>L</original>
    <variation>R</variation>
    <location>
        <position position="1559"/>
    </location>
</feature>
<dbReference type="EC" id="2.7.11.1"/>
<dbReference type="EMBL" id="AY429682">
    <property type="protein sequence ID" value="AAS55398.1"/>
    <property type="molecule type" value="mRNA"/>
</dbReference>
<dbReference type="EMBL" id="AY429683">
    <property type="protein sequence ID" value="AAS55399.1"/>
    <property type="molecule type" value="Genomic_DNA"/>
</dbReference>
<dbReference type="EMBL" id="AAFI02000024">
    <property type="protein sequence ID" value="EAS66889.1"/>
    <property type="molecule type" value="Genomic_DNA"/>
</dbReference>
<dbReference type="RefSeq" id="XP_001134573.1">
    <property type="nucleotide sequence ID" value="XM_001134573.1"/>
</dbReference>
<dbReference type="SMR" id="Q5VJL3"/>
<dbReference type="FunCoup" id="Q5VJL3">
    <property type="interactions" value="744"/>
</dbReference>
<dbReference type="PaxDb" id="44689-DDB0232936"/>
<dbReference type="EnsemblProtists" id="EAS66889">
    <property type="protein sequence ID" value="EAS66889"/>
    <property type="gene ID" value="DDB_G0278879"/>
</dbReference>
<dbReference type="GeneID" id="8621755"/>
<dbReference type="KEGG" id="ddi:DDB_G0278879"/>
<dbReference type="dictyBase" id="DDB_G0278879">
    <property type="gene designation" value="gdt9"/>
</dbReference>
<dbReference type="VEuPathDB" id="AmoebaDB:DDB_G0278879"/>
<dbReference type="eggNOG" id="KOG0192">
    <property type="taxonomic scope" value="Eukaryota"/>
</dbReference>
<dbReference type="HOGENOM" id="CLU_251247_0_0_1"/>
<dbReference type="InParanoid" id="Q5VJL3"/>
<dbReference type="OMA" id="CHKEEND"/>
<dbReference type="PhylomeDB" id="Q5VJL3"/>
<dbReference type="PRO" id="PR:Q5VJL3"/>
<dbReference type="Proteomes" id="UP000002195">
    <property type="component" value="Chromosome 3"/>
</dbReference>
<dbReference type="GO" id="GO:0016020">
    <property type="term" value="C:membrane"/>
    <property type="evidence" value="ECO:0007669"/>
    <property type="project" value="UniProtKB-SubCell"/>
</dbReference>
<dbReference type="GO" id="GO:0005524">
    <property type="term" value="F:ATP binding"/>
    <property type="evidence" value="ECO:0007669"/>
    <property type="project" value="UniProtKB-KW"/>
</dbReference>
<dbReference type="GO" id="GO:0106310">
    <property type="term" value="F:protein serine kinase activity"/>
    <property type="evidence" value="ECO:0007669"/>
    <property type="project" value="RHEA"/>
</dbReference>
<dbReference type="GO" id="GO:0004674">
    <property type="term" value="F:protein serine/threonine kinase activity"/>
    <property type="evidence" value="ECO:0007669"/>
    <property type="project" value="UniProtKB-KW"/>
</dbReference>
<dbReference type="GO" id="GO:0050793">
    <property type="term" value="P:regulation of developmental process"/>
    <property type="evidence" value="ECO:0000318"/>
    <property type="project" value="GO_Central"/>
</dbReference>
<dbReference type="CDD" id="cd13999">
    <property type="entry name" value="STKc_MAP3K-like"/>
    <property type="match status" value="1"/>
</dbReference>
<dbReference type="Gene3D" id="2.60.40.10">
    <property type="entry name" value="Immunoglobulins"/>
    <property type="match status" value="1"/>
</dbReference>
<dbReference type="Gene3D" id="3.30.200.20">
    <property type="entry name" value="Phosphorylase Kinase, domain 1"/>
    <property type="match status" value="1"/>
</dbReference>
<dbReference type="Gene3D" id="1.10.510.10">
    <property type="entry name" value="Transferase(Phosphotransferase) domain 1"/>
    <property type="match status" value="1"/>
</dbReference>
<dbReference type="InterPro" id="IPR052015">
    <property type="entry name" value="GDT_regulator"/>
</dbReference>
<dbReference type="InterPro" id="IPR013783">
    <property type="entry name" value="Ig-like_fold"/>
</dbReference>
<dbReference type="InterPro" id="IPR011009">
    <property type="entry name" value="Kinase-like_dom_sf"/>
</dbReference>
<dbReference type="InterPro" id="IPR000719">
    <property type="entry name" value="Prot_kinase_dom"/>
</dbReference>
<dbReference type="InterPro" id="IPR001245">
    <property type="entry name" value="Ser-Thr/Tyr_kinase_cat_dom"/>
</dbReference>
<dbReference type="InterPro" id="IPR008271">
    <property type="entry name" value="Ser/Thr_kinase_AS"/>
</dbReference>
<dbReference type="InterPro" id="IPR026237">
    <property type="entry name" value="STKINASEGDT"/>
</dbReference>
<dbReference type="PANTHER" id="PTHR47774">
    <property type="entry name" value="GROWTH-DIFFERENTIATION TRANSITION PROTEIN 5-RELATED"/>
    <property type="match status" value="1"/>
</dbReference>
<dbReference type="PANTHER" id="PTHR47774:SF1">
    <property type="entry name" value="GROWTH-DIFFERENTIATION TRANSITION PROTEIN 5-RELATED"/>
    <property type="match status" value="1"/>
</dbReference>
<dbReference type="Pfam" id="PF07714">
    <property type="entry name" value="PK_Tyr_Ser-Thr"/>
    <property type="match status" value="1"/>
</dbReference>
<dbReference type="PRINTS" id="PR02079">
    <property type="entry name" value="STKINASEGDT"/>
</dbReference>
<dbReference type="SMART" id="SM00220">
    <property type="entry name" value="S_TKc"/>
    <property type="match status" value="1"/>
</dbReference>
<dbReference type="SUPFAM" id="SSF56112">
    <property type="entry name" value="Protein kinase-like (PK-like)"/>
    <property type="match status" value="1"/>
</dbReference>
<dbReference type="PROSITE" id="PS50011">
    <property type="entry name" value="PROTEIN_KINASE_DOM"/>
    <property type="match status" value="1"/>
</dbReference>
<dbReference type="PROSITE" id="PS00108">
    <property type="entry name" value="PROTEIN_KINASE_ST"/>
    <property type="match status" value="1"/>
</dbReference>
<gene>
    <name type="primary">gdt9</name>
    <name type="ORF">DDB_G0278879</name>
</gene>
<proteinExistence type="evidence at transcript level"/>
<keyword id="KW-0067">ATP-binding</keyword>
<keyword id="KW-0418">Kinase</keyword>
<keyword id="KW-0472">Membrane</keyword>
<keyword id="KW-0547">Nucleotide-binding</keyword>
<keyword id="KW-1185">Reference proteome</keyword>
<keyword id="KW-0723">Serine/threonine-protein kinase</keyword>
<keyword id="KW-0732">Signal</keyword>
<keyword id="KW-0808">Transferase</keyword>
<keyword id="KW-0812">Transmembrane</keyword>
<keyword id="KW-1133">Transmembrane helix</keyword>
<evidence type="ECO:0000255" key="1"/>
<evidence type="ECO:0000255" key="2">
    <source>
        <dbReference type="PROSITE-ProRule" id="PRU00159"/>
    </source>
</evidence>
<evidence type="ECO:0000255" key="3">
    <source>
        <dbReference type="PROSITE-ProRule" id="PRU10027"/>
    </source>
</evidence>
<evidence type="ECO:0000256" key="4">
    <source>
        <dbReference type="SAM" id="MobiDB-lite"/>
    </source>
</evidence>
<evidence type="ECO:0000305" key="5"/>
<protein>
    <recommendedName>
        <fullName>Probable serine/threonine-protein kinase gdt9</fullName>
        <ecNumber>2.7.11.1</ecNumber>
    </recommendedName>
    <alternativeName>
        <fullName>Growth-differentiation transition protein 9</fullName>
    </alternativeName>
    <alternativeName>
        <fullName>Protein kinase Dusty</fullName>
    </alternativeName>
</protein>
<accession>Q5VJL3</accession>
<accession>Q1ZXI4</accession>